<proteinExistence type="evidence at protein level"/>
<organism>
    <name type="scientific">Caenorhabditis elegans</name>
    <dbReference type="NCBI Taxonomy" id="6239"/>
    <lineage>
        <taxon>Eukaryota</taxon>
        <taxon>Metazoa</taxon>
        <taxon>Ecdysozoa</taxon>
        <taxon>Nematoda</taxon>
        <taxon>Chromadorea</taxon>
        <taxon>Rhabditida</taxon>
        <taxon>Rhabditina</taxon>
        <taxon>Rhabditomorpha</taxon>
        <taxon>Rhabditoidea</taxon>
        <taxon>Rhabditidae</taxon>
        <taxon>Peloderinae</taxon>
        <taxon>Caenorhabditis</taxon>
    </lineage>
</organism>
<dbReference type="EMBL" id="AF339882">
    <property type="protein sequence ID" value="AAK14396.1"/>
    <property type="molecule type" value="mRNA"/>
</dbReference>
<dbReference type="EMBL" id="Z69790">
    <property type="protein sequence ID" value="CAA93653.3"/>
    <property type="molecule type" value="Genomic_DNA"/>
</dbReference>
<dbReference type="EMBL" id="Z69790">
    <property type="protein sequence ID" value="CAD56579.2"/>
    <property type="molecule type" value="Genomic_DNA"/>
</dbReference>
<dbReference type="PIR" id="T21694">
    <property type="entry name" value="T21694"/>
</dbReference>
<dbReference type="RefSeq" id="NP_001024625.2">
    <property type="nucleotide sequence ID" value="NM_001029454.4"/>
</dbReference>
<dbReference type="RefSeq" id="NP_510443.4">
    <property type="nucleotide sequence ID" value="NM_078042.4"/>
</dbReference>
<dbReference type="SMR" id="Q19981"/>
<dbReference type="BioGRID" id="46463">
    <property type="interactions" value="5"/>
</dbReference>
<dbReference type="FunCoup" id="Q19981">
    <property type="interactions" value="1782"/>
</dbReference>
<dbReference type="STRING" id="6239.F33C8.1.1"/>
<dbReference type="GlyCosmos" id="Q19981">
    <property type="glycosylation" value="17 sites, No reported glycans"/>
</dbReference>
<dbReference type="iPTMnet" id="Q19981"/>
<dbReference type="PaxDb" id="6239-F33C8.1a"/>
<dbReference type="PeptideAtlas" id="Q19981"/>
<dbReference type="KEGG" id="cel:CELE_F33C8.1"/>
<dbReference type="UCSC" id="F33C8.1b">
    <molecule id="Q19981-1"/>
    <property type="organism name" value="c. elegans"/>
</dbReference>
<dbReference type="CTD" id="181566"/>
<dbReference type="WormBase" id="F33C8.1a">
    <molecule id="Q19981-1"/>
    <property type="protein sequence ID" value="CE41898"/>
    <property type="gene ID" value="WBGene00006432"/>
    <property type="gene designation" value="tag-53"/>
</dbReference>
<dbReference type="WormBase" id="F33C8.1b">
    <molecule id="Q19981-2"/>
    <property type="protein sequence ID" value="CE41899"/>
    <property type="gene ID" value="WBGene00006432"/>
    <property type="gene designation" value="tag-53"/>
</dbReference>
<dbReference type="eggNOG" id="KOG1388">
    <property type="taxonomic scope" value="Eukaryota"/>
</dbReference>
<dbReference type="InParanoid" id="Q19981"/>
<dbReference type="OMA" id="MNGCPSD"/>
<dbReference type="OrthoDB" id="9998912at2759"/>
<dbReference type="PhylomeDB" id="Q19981"/>
<dbReference type="PRO" id="PR:Q19981"/>
<dbReference type="Proteomes" id="UP000001940">
    <property type="component" value="Chromosome X"/>
</dbReference>
<dbReference type="GO" id="GO:0016020">
    <property type="term" value="C:membrane"/>
    <property type="evidence" value="ECO:0007669"/>
    <property type="project" value="UniProtKB-SubCell"/>
</dbReference>
<dbReference type="GO" id="GO:0009887">
    <property type="term" value="P:animal organ morphogenesis"/>
    <property type="evidence" value="ECO:0000318"/>
    <property type="project" value="GO_Central"/>
</dbReference>
<dbReference type="GO" id="GO:0009888">
    <property type="term" value="P:tissue development"/>
    <property type="evidence" value="ECO:0000318"/>
    <property type="project" value="GO_Central"/>
</dbReference>
<dbReference type="CDD" id="cd00041">
    <property type="entry name" value="CUB"/>
    <property type="match status" value="1"/>
</dbReference>
<dbReference type="CDD" id="cd00054">
    <property type="entry name" value="EGF_CA"/>
    <property type="match status" value="1"/>
</dbReference>
<dbReference type="CDD" id="cd00055">
    <property type="entry name" value="EGF_Lam"/>
    <property type="match status" value="2"/>
</dbReference>
<dbReference type="FunFam" id="2.10.25.10:FF:001170">
    <property type="entry name" value="Predicted protein"/>
    <property type="match status" value="1"/>
</dbReference>
<dbReference type="Gene3D" id="2.120.10.80">
    <property type="entry name" value="Kelch-type beta propeller"/>
    <property type="match status" value="2"/>
</dbReference>
<dbReference type="Gene3D" id="2.10.25.10">
    <property type="entry name" value="Laminin"/>
    <property type="match status" value="3"/>
</dbReference>
<dbReference type="Gene3D" id="2.60.120.290">
    <property type="entry name" value="Spermadhesin, CUB domain"/>
    <property type="match status" value="1"/>
</dbReference>
<dbReference type="InterPro" id="IPR056737">
    <property type="entry name" value="Beta-prop_ATRN-MKLN-like"/>
</dbReference>
<dbReference type="InterPro" id="IPR000859">
    <property type="entry name" value="CUB_dom"/>
</dbReference>
<dbReference type="InterPro" id="IPR000742">
    <property type="entry name" value="EGF-like_dom"/>
</dbReference>
<dbReference type="InterPro" id="IPR056732">
    <property type="entry name" value="GBD_ATRN"/>
</dbReference>
<dbReference type="InterPro" id="IPR015915">
    <property type="entry name" value="Kelch-typ_b-propeller"/>
</dbReference>
<dbReference type="InterPro" id="IPR002049">
    <property type="entry name" value="LE_dom"/>
</dbReference>
<dbReference type="InterPro" id="IPR056863">
    <property type="entry name" value="LMN_ATRN_NET-like_EGF"/>
</dbReference>
<dbReference type="InterPro" id="IPR051568">
    <property type="entry name" value="LZTR1/Attractin"/>
</dbReference>
<dbReference type="InterPro" id="IPR002165">
    <property type="entry name" value="Plexin_repeat"/>
</dbReference>
<dbReference type="InterPro" id="IPR016201">
    <property type="entry name" value="PSI"/>
</dbReference>
<dbReference type="InterPro" id="IPR035914">
    <property type="entry name" value="Sperma_CUB_dom_sf"/>
</dbReference>
<dbReference type="PANTHER" id="PTHR46376:SF2">
    <property type="entry name" value="DISTRACTED, ISOFORM B"/>
    <property type="match status" value="1"/>
</dbReference>
<dbReference type="PANTHER" id="PTHR46376">
    <property type="entry name" value="LEUCINE-ZIPPER-LIKE TRANSCRIPTIONAL REGULATOR 1"/>
    <property type="match status" value="1"/>
</dbReference>
<dbReference type="Pfam" id="PF24981">
    <property type="entry name" value="Beta-prop_ATRN-LZTR1"/>
    <property type="match status" value="1"/>
</dbReference>
<dbReference type="Pfam" id="PF00431">
    <property type="entry name" value="CUB"/>
    <property type="match status" value="1"/>
</dbReference>
<dbReference type="Pfam" id="PF00053">
    <property type="entry name" value="EGF_laminin"/>
    <property type="match status" value="1"/>
</dbReference>
<dbReference type="Pfam" id="PF24973">
    <property type="entry name" value="EGF_LMN_ATRN"/>
    <property type="match status" value="1"/>
</dbReference>
<dbReference type="Pfam" id="PF24972">
    <property type="entry name" value="GBD_ATRN"/>
    <property type="match status" value="1"/>
</dbReference>
<dbReference type="Pfam" id="PF01437">
    <property type="entry name" value="PSI"/>
    <property type="match status" value="1"/>
</dbReference>
<dbReference type="SMART" id="SM00042">
    <property type="entry name" value="CUB"/>
    <property type="match status" value="1"/>
</dbReference>
<dbReference type="SMART" id="SM00181">
    <property type="entry name" value="EGF"/>
    <property type="match status" value="4"/>
</dbReference>
<dbReference type="SMART" id="SM00180">
    <property type="entry name" value="EGF_Lam"/>
    <property type="match status" value="2"/>
</dbReference>
<dbReference type="SMART" id="SM00423">
    <property type="entry name" value="PSI"/>
    <property type="match status" value="3"/>
</dbReference>
<dbReference type="SUPFAM" id="SSF57196">
    <property type="entry name" value="EGF/Laminin"/>
    <property type="match status" value="1"/>
</dbReference>
<dbReference type="SUPFAM" id="SSF117281">
    <property type="entry name" value="Kelch motif"/>
    <property type="match status" value="1"/>
</dbReference>
<dbReference type="SUPFAM" id="SSF49854">
    <property type="entry name" value="Spermadhesin, CUB domain"/>
    <property type="match status" value="1"/>
</dbReference>
<dbReference type="PROSITE" id="PS01180">
    <property type="entry name" value="CUB"/>
    <property type="match status" value="1"/>
</dbReference>
<dbReference type="PROSITE" id="PS00022">
    <property type="entry name" value="EGF_1"/>
    <property type="match status" value="2"/>
</dbReference>
<dbReference type="PROSITE" id="PS01186">
    <property type="entry name" value="EGF_2"/>
    <property type="match status" value="2"/>
</dbReference>
<dbReference type="PROSITE" id="PS50026">
    <property type="entry name" value="EGF_3"/>
    <property type="match status" value="1"/>
</dbReference>
<dbReference type="PROSITE" id="PS01248">
    <property type="entry name" value="EGF_LAM_1"/>
    <property type="match status" value="1"/>
</dbReference>
<dbReference type="PROSITE" id="PS50027">
    <property type="entry name" value="EGF_LAM_2"/>
    <property type="match status" value="2"/>
</dbReference>
<name>TAG53_CAEEL</name>
<gene>
    <name type="primary">tag-53</name>
    <name type="ORF">F33C8.1</name>
</gene>
<keyword id="KW-0025">Alternative splicing</keyword>
<keyword id="KW-1015">Disulfide bond</keyword>
<keyword id="KW-0245">EGF-like domain</keyword>
<keyword id="KW-0325">Glycoprotein</keyword>
<keyword id="KW-0880">Kelch repeat</keyword>
<keyword id="KW-0424">Laminin EGF-like domain</keyword>
<keyword id="KW-0472">Membrane</keyword>
<keyword id="KW-1185">Reference proteome</keyword>
<keyword id="KW-0677">Repeat</keyword>
<keyword id="KW-0732">Signal</keyword>
<keyword id="KW-0812">Transmembrane</keyword>
<keyword id="KW-1133">Transmembrane helix</keyword>
<protein>
    <recommendedName>
        <fullName>Putative protein tag-53</fullName>
    </recommendedName>
</protein>
<evidence type="ECO:0000250" key="1"/>
<evidence type="ECO:0000255" key="2"/>
<evidence type="ECO:0000255" key="3">
    <source>
        <dbReference type="PROSITE-ProRule" id="PRU00059"/>
    </source>
</evidence>
<evidence type="ECO:0000255" key="4">
    <source>
        <dbReference type="PROSITE-ProRule" id="PRU00076"/>
    </source>
</evidence>
<evidence type="ECO:0000255" key="5">
    <source>
        <dbReference type="PROSITE-ProRule" id="PRU00460"/>
    </source>
</evidence>
<evidence type="ECO:0000269" key="6">
    <source>
    </source>
</evidence>
<evidence type="ECO:0000305" key="7"/>
<feature type="signal peptide" evidence="2">
    <location>
        <begin position="1"/>
        <end status="unknown"/>
    </location>
</feature>
<feature type="chain" id="PRO_0000017101" description="Putative protein tag-53">
    <location>
        <begin status="unknown"/>
        <end position="1329"/>
    </location>
</feature>
<feature type="topological domain" description="Extracellular" evidence="2">
    <location>
        <begin status="unknown"/>
        <end position="1175"/>
    </location>
</feature>
<feature type="transmembrane region" description="Helical" evidence="2">
    <location>
        <begin position="1176"/>
        <end position="1196"/>
    </location>
</feature>
<feature type="topological domain" description="Cytoplasmic" evidence="2">
    <location>
        <begin position="1197"/>
        <end position="1329"/>
    </location>
</feature>
<feature type="domain" description="EGF-like 1" evidence="4">
    <location>
        <begin position="65"/>
        <end position="92"/>
    </location>
</feature>
<feature type="domain" description="CUB" evidence="3">
    <location>
        <begin position="94"/>
        <end position="203"/>
    </location>
</feature>
<feature type="domain" description="EGF-like 2" evidence="4">
    <location>
        <begin position="204"/>
        <end position="232"/>
    </location>
</feature>
<feature type="domain" description="EGF-like 3" evidence="4">
    <location>
        <begin position="235"/>
        <end position="270"/>
    </location>
</feature>
<feature type="repeat" description="Kelch 1">
    <location>
        <begin position="302"/>
        <end position="353"/>
    </location>
</feature>
<feature type="repeat" description="Kelch 2">
    <location>
        <begin position="355"/>
        <end position="408"/>
    </location>
</feature>
<feature type="repeat" description="Kelch 3">
    <location>
        <begin position="416"/>
        <end position="463"/>
    </location>
</feature>
<feature type="repeat" description="Kelch 4">
    <location>
        <begin position="471"/>
        <end position="518"/>
    </location>
</feature>
<feature type="repeat" description="Kelch 5">
    <location>
        <begin position="520"/>
        <end position="575"/>
    </location>
</feature>
<feature type="repeat" description="Kelch 6">
    <location>
        <begin position="577"/>
        <end position="619"/>
    </location>
</feature>
<feature type="domain" description="Laminin EGF-like 1" evidence="5">
    <location>
        <begin position="945"/>
        <end position="999"/>
    </location>
</feature>
<feature type="domain" description="EGF-like 4" evidence="4">
    <location>
        <begin position="952"/>
        <end position="998"/>
    </location>
</feature>
<feature type="domain" description="Laminin EGF-like 2" evidence="5">
    <location>
        <begin position="1000"/>
        <end position="1047"/>
    </location>
</feature>
<feature type="glycosylation site" description="N-linked (GlcNAc...) asparagine" evidence="6">
    <location>
        <position position="103"/>
    </location>
</feature>
<feature type="glycosylation site" description="N-linked (GlcNAc...) asparagine" evidence="2">
    <location>
        <position position="197"/>
    </location>
</feature>
<feature type="glycosylation site" description="N-linked (GlcNAc...) asparagine" evidence="2">
    <location>
        <position position="208"/>
    </location>
</feature>
<feature type="glycosylation site" description="N-linked (GlcNAc...) asparagine" evidence="2">
    <location>
        <position position="324"/>
    </location>
</feature>
<feature type="glycosylation site" description="N-linked (GlcNAc...) asparagine" evidence="2">
    <location>
        <position position="395"/>
    </location>
</feature>
<feature type="glycosylation site" description="N-linked (GlcNAc...) asparagine" evidence="2">
    <location>
        <position position="447"/>
    </location>
</feature>
<feature type="glycosylation site" description="N-linked (GlcNAc...) asparagine" evidence="2">
    <location>
        <position position="481"/>
    </location>
</feature>
<feature type="glycosylation site" description="N-linked (GlcNAc...) asparagine" evidence="2">
    <location>
        <position position="529"/>
    </location>
</feature>
<feature type="glycosylation site" description="N-linked (GlcNAc...) asparagine" evidence="6">
    <location>
        <position position="555"/>
    </location>
</feature>
<feature type="glycosylation site" description="N-linked (GlcNAc...) asparagine" evidence="2">
    <location>
        <position position="820"/>
    </location>
</feature>
<feature type="glycosylation site" description="N-linked (GlcNAc...) asparagine; atypical" evidence="6">
    <location>
        <position position="832"/>
    </location>
</feature>
<feature type="glycosylation site" description="N-linked (GlcNAc...) asparagine" evidence="2">
    <location>
        <position position="833"/>
    </location>
</feature>
<feature type="glycosylation site" description="N-linked (GlcNAc...) asparagine" evidence="2">
    <location>
        <position position="934"/>
    </location>
</feature>
<feature type="glycosylation site" description="N-linked (GlcNAc...) asparagine" evidence="2">
    <location>
        <position position="973"/>
    </location>
</feature>
<feature type="glycosylation site" description="N-linked (GlcNAc...) asparagine" evidence="2">
    <location>
        <position position="1066"/>
    </location>
</feature>
<feature type="glycosylation site" description="N-linked (GlcNAc...) asparagine" evidence="2">
    <location>
        <position position="1102"/>
    </location>
</feature>
<feature type="glycosylation site" description="N-linked (GlcNAc...) asparagine" evidence="6">
    <location>
        <position position="1147"/>
    </location>
</feature>
<feature type="disulfide bond" evidence="1">
    <location>
        <begin position="66"/>
        <end position="75"/>
    </location>
</feature>
<feature type="disulfide bond" evidence="1">
    <location>
        <begin position="70"/>
        <end position="80"/>
    </location>
</feature>
<feature type="disulfide bond" evidence="1">
    <location>
        <begin position="82"/>
        <end position="91"/>
    </location>
</feature>
<feature type="disulfide bond" evidence="1">
    <location>
        <begin position="94"/>
        <end position="120"/>
    </location>
</feature>
<feature type="disulfide bond" evidence="1">
    <location>
        <begin position="144"/>
        <end position="166"/>
    </location>
</feature>
<feature type="disulfide bond" evidence="1">
    <location>
        <begin position="205"/>
        <end position="215"/>
    </location>
</feature>
<feature type="disulfide bond" evidence="1">
    <location>
        <begin position="209"/>
        <end position="220"/>
    </location>
</feature>
<feature type="disulfide bond" evidence="1">
    <location>
        <begin position="222"/>
        <end position="231"/>
    </location>
</feature>
<feature type="disulfide bond" evidence="1">
    <location>
        <begin position="236"/>
        <end position="252"/>
    </location>
</feature>
<feature type="disulfide bond" evidence="1">
    <location>
        <begin position="247"/>
        <end position="257"/>
    </location>
</feature>
<feature type="disulfide bond" evidence="1">
    <location>
        <begin position="259"/>
        <end position="269"/>
    </location>
</feature>
<feature type="disulfide bond" evidence="1">
    <location>
        <begin position="945"/>
        <end position="953"/>
    </location>
</feature>
<feature type="disulfide bond" evidence="1">
    <location>
        <begin position="947"/>
        <end position="968"/>
    </location>
</feature>
<feature type="disulfide bond" evidence="1">
    <location>
        <begin position="971"/>
        <end position="980"/>
    </location>
</feature>
<feature type="disulfide bond" evidence="1">
    <location>
        <begin position="983"/>
        <end position="997"/>
    </location>
</feature>
<feature type="disulfide bond" evidence="1">
    <location>
        <begin position="1000"/>
        <end position="1009"/>
    </location>
</feature>
<feature type="disulfide bond" evidence="1">
    <location>
        <begin position="1002"/>
        <end position="1016"/>
    </location>
</feature>
<feature type="disulfide bond" evidence="1">
    <location>
        <begin position="1018"/>
        <end position="1028"/>
    </location>
</feature>
<feature type="disulfide bond" evidence="1">
    <location>
        <begin position="1031"/>
        <end position="1045"/>
    </location>
</feature>
<feature type="splice variant" id="VSP_007250" description="In isoform b." evidence="7">
    <original>SPAFFLVHSRRKGKNRDPNQYQAADMSRVPRAAAFNSL</original>
    <variation>I</variation>
    <location>
        <begin position="753"/>
        <end position="790"/>
    </location>
</feature>
<sequence>MLGNITPVSFFKTWVLKKTDVHVMISAREVFPCFIFRVFLLFQVFSRVHTLTNHANFEFEKSLSSCDKPCYNGVCLNKACVCSKGWYGSQCDHCFGRIRISDNASYISDGPLDYSPSAKCTWLIEPENSATPLKIRINSFFTECGWDYLYIYDGDSVYGKQLAALCGEQPSQEFTAASGKALVHFFSDLAINLNGFNVSYESNRCAYNCSNHGSCLNGKCDCEDGYKGLNCEYQVCQLSGKSTESPCHEGQCVDGRCECLSARVHGETCQMPVSSSVWDLIHPTNNAPTGKASHASIAIDDVVWSIGGEFFDGSSDPNNIDVYNVTSRIWSKVEVSGDMPKPRFDHTVVKYKNKLYMFGGVTKTQVRHQTTQAATNELWIFDMGSKKWAQQIHKNETIIAAPFAVAGHSAHVIRSEMFVIFGYNPLFGFMHHVQIYNFETEEWTVANTSDHVYGRFKHSAVEYTTPTGATAILVYGGSMWNNTITDSLMQFDTSTKKWSNLPQSGVQLYLHAAAYLNGLMVVVGGRGSNVTAGSKSECFSNMVQSYDVACKQWSNMSTAPVDLKRFGHSVHVIGQKLYALGGFNGKMKSDVWTLSPAKCSSATRPDECRLITDGTKCVFVDSSCVPFDPTVSYKSSFASMIKSSTPKSFDECTNTPLRLALKTCEEQTDCVSCASKSGCGWCSSGEQCLPNEQECVDGPGMLTSWEKCPQRNSVATMRPCNMENNCGSCRISPHCTWYPIDKASPCVSKEDLSPAFFLVHSRRKGKNRDPNQYQAADMSRVPRAAAFNSLAVVYEYETKSVLADRNKFLSPSHFPSFFRNATECPMPCAQRNNCSDCTDLEQCMWCPSTNRCINLEAYTLSFAYGQCHSWVTSGSGSVINRVCQAESVVCEEHKTCGECQRDPGCGWLADDSKTGLGLCIRGTSTGPLEPKPENSTWYFIDCPACQCNGHSTCFTSVGSFPPVTIEKCQSCQNHTTGAHCERCAPGFYGDARNGGVCSPCDCHHQADMCDPVSGQCFCKTKGVTGDRCDKCEAKYVGNPRNGTPCFYELAVDFIFTFKLRSDDKDNHTSEIYLYSVPYKKDTDVTFQISCESPKGNALVALNMTSSYVNGLADKSQAMMVDTICDSKGFRRVYVASDKGYPFGPDSNTTFFVRVYNFNTPVQIVVSFAQSPPINWVLFFVIFAACFIVLLVVAGLLWMIKVRIEAYRRNQRRIDEIEHMASRPFASTKMELSMLSQFSSAGGPTPLSIEPCSNYRAGVFTLAVRLPTGGKAVTPSGTSGLAVASSLCLLTPQQVGVLQAQDNGESNSGRKSNFRNLLRLTIRQRPNNND</sequence>
<accession>Q19981</accession>
<accession>Q8I4J9</accession>
<accession>Q9BMB0</accession>
<reference key="1">
    <citation type="submission" date="2001-01" db="EMBL/GenBank/DDBJ databases">
        <title>Identification of the correct 3' exon sequence for Caenorhabditis elegans attractin.</title>
        <authorList>
            <person name="Duke-Cohan J.S."/>
            <person name="Ashrafi K."/>
            <person name="Ruvkun G."/>
        </authorList>
    </citation>
    <scope>NUCLEOTIDE SEQUENCE [MRNA] (ISOFORM A)</scope>
</reference>
<reference key="2">
    <citation type="journal article" date="1998" name="Science">
        <title>Genome sequence of the nematode C. elegans: a platform for investigating biology.</title>
        <authorList>
            <consortium name="The C. elegans sequencing consortium"/>
        </authorList>
    </citation>
    <scope>NUCLEOTIDE SEQUENCE [LARGE SCALE GENOMIC DNA]</scope>
    <scope>ALTERNATIVE SPLICING</scope>
    <source>
        <strain>Bristol N2</strain>
    </source>
</reference>
<reference key="3">
    <citation type="journal article" date="2007" name="Mol. Cell. Proteomics">
        <title>Proteomics reveals N-linked glycoprotein diversity in Caenorhabditis elegans and suggests an atypical translocation mechanism for integral membrane proteins.</title>
        <authorList>
            <person name="Kaji H."/>
            <person name="Kamiie J."/>
            <person name="Kawakami H."/>
            <person name="Kido K."/>
            <person name="Yamauchi Y."/>
            <person name="Shinkawa T."/>
            <person name="Taoka M."/>
            <person name="Takahashi N."/>
            <person name="Isobe T."/>
        </authorList>
    </citation>
    <scope>GLYCOSYLATION [LARGE SCALE ANALYSIS] AT ASN-103; ASN-555; ASN-832 AND ASN-1147</scope>
    <scope>IDENTIFICATION BY MASS SPECTROMETRY</scope>
    <source>
        <strain>Bristol N2</strain>
    </source>
</reference>
<comment type="subcellular location">
    <subcellularLocation>
        <location evidence="1">Membrane</location>
        <topology evidence="1">Single-pass type I membrane protein</topology>
    </subcellularLocation>
</comment>
<comment type="alternative products">
    <event type="alternative splicing"/>
    <isoform>
        <id>Q19981-1</id>
        <name>a</name>
        <sequence type="displayed"/>
    </isoform>
    <isoform>
        <id>Q19981-2</id>
        <name>b</name>
        <sequence type="described" ref="VSP_007250"/>
    </isoform>
</comment>